<gene>
    <name evidence="6" type="primary">V1ra14</name>
</gene>
<accession>Q5J3K9</accession>
<dbReference type="EMBL" id="AY510301">
    <property type="protein sequence ID" value="AAR87968.1"/>
    <property type="molecule type" value="mRNA"/>
</dbReference>
<dbReference type="SMR" id="Q5J3K9"/>
<dbReference type="STRING" id="10116.ENSRNOP00000072684"/>
<dbReference type="GlyCosmos" id="Q5J3K9">
    <property type="glycosylation" value="1 site, No reported glycans"/>
</dbReference>
<dbReference type="GlyGen" id="Q5J3K9">
    <property type="glycosylation" value="1 site"/>
</dbReference>
<dbReference type="UCSC" id="RGD:1359628">
    <property type="organism name" value="rat"/>
</dbReference>
<dbReference type="AGR" id="RGD:41167200"/>
<dbReference type="RGD" id="1359628">
    <property type="gene designation" value="V1ra14"/>
</dbReference>
<dbReference type="InParanoid" id="Q5J3K9"/>
<dbReference type="PhylomeDB" id="Q5J3K9"/>
<dbReference type="PRO" id="PR:Q5J3K9"/>
<dbReference type="Proteomes" id="UP000002494">
    <property type="component" value="Unplaced"/>
</dbReference>
<dbReference type="GO" id="GO:0005886">
    <property type="term" value="C:plasma membrane"/>
    <property type="evidence" value="ECO:0007669"/>
    <property type="project" value="UniProtKB-SubCell"/>
</dbReference>
<dbReference type="GO" id="GO:0016503">
    <property type="term" value="F:pheromone receptor activity"/>
    <property type="evidence" value="ECO:0007669"/>
    <property type="project" value="InterPro"/>
</dbReference>
<dbReference type="GO" id="GO:0019236">
    <property type="term" value="P:response to pheromone"/>
    <property type="evidence" value="ECO:0007669"/>
    <property type="project" value="UniProtKB-KW"/>
</dbReference>
<dbReference type="GO" id="GO:0007606">
    <property type="term" value="P:sensory perception of chemical stimulus"/>
    <property type="evidence" value="ECO:0007669"/>
    <property type="project" value="UniProtKB-ARBA"/>
</dbReference>
<dbReference type="CDD" id="cd13949">
    <property type="entry name" value="7tm_V1R_pheromone"/>
    <property type="match status" value="1"/>
</dbReference>
<dbReference type="FunFam" id="1.20.1070.10:FF:000051">
    <property type="entry name" value="Vomeronasal type-1 receptor"/>
    <property type="match status" value="1"/>
</dbReference>
<dbReference type="Gene3D" id="1.20.1070.10">
    <property type="entry name" value="Rhodopsin 7-helix transmembrane proteins"/>
    <property type="match status" value="1"/>
</dbReference>
<dbReference type="InterPro" id="IPR017452">
    <property type="entry name" value="GPCR_Rhodpsn_7TM"/>
</dbReference>
<dbReference type="InterPro" id="IPR004072">
    <property type="entry name" value="Vmron_rcpt_1"/>
</dbReference>
<dbReference type="PANTHER" id="PTHR24062">
    <property type="entry name" value="VOMERONASAL TYPE-1 RECEPTOR"/>
    <property type="match status" value="1"/>
</dbReference>
<dbReference type="Pfam" id="PF03402">
    <property type="entry name" value="V1R"/>
    <property type="match status" value="1"/>
</dbReference>
<dbReference type="PRINTS" id="PR01534">
    <property type="entry name" value="VOMERONASL1R"/>
</dbReference>
<dbReference type="SUPFAM" id="SSF81321">
    <property type="entry name" value="Family A G protein-coupled receptor-like"/>
    <property type="match status" value="1"/>
</dbReference>
<dbReference type="PROSITE" id="PS50262">
    <property type="entry name" value="G_PROTEIN_RECEP_F1_2"/>
    <property type="match status" value="1"/>
</dbReference>
<sequence length="339" mass="38487">MMGVQICQGMMSEIPFFSPPPQFSYMMNKNIRLHTDSNIRNTFFTDIGIGISANSLLLLFNIFKLTRGQRSRLTDLPIGLLSLINLLMLLMAAFIATDTFISWKGWDDIICKFLVYLYRTFRGLSLCTSCLLSVLQAIILSPRSSCLAKFKHKPPHHISCAILSLSVLYMFIGSHLLVSIIATPNLTTNDFIHVTQSCSILPMSYLMQCMFSTLLAIRDVFLISLMVLSTWYMVALLCRHRKQTRHLQGTSLSPKASPEQRATRSILMLMSLFVLMSVFDSIVCSSRTMYLNDPISYSIQLFMVHIYATVSPFVFIVTEKHIVNFLRSVCEGDECLNIH</sequence>
<name>V1A14_RAT</name>
<organism>
    <name type="scientific">Rattus norvegicus</name>
    <name type="common">Rat</name>
    <dbReference type="NCBI Taxonomy" id="10116"/>
    <lineage>
        <taxon>Eukaryota</taxon>
        <taxon>Metazoa</taxon>
        <taxon>Chordata</taxon>
        <taxon>Craniata</taxon>
        <taxon>Vertebrata</taxon>
        <taxon>Euteleostomi</taxon>
        <taxon>Mammalia</taxon>
        <taxon>Eutheria</taxon>
        <taxon>Euarchontoglires</taxon>
        <taxon>Glires</taxon>
        <taxon>Rodentia</taxon>
        <taxon>Myomorpha</taxon>
        <taxon>Muroidea</taxon>
        <taxon>Muridae</taxon>
        <taxon>Murinae</taxon>
        <taxon>Rattus</taxon>
    </lineage>
</organism>
<comment type="function">
    <text evidence="1">Putative pheromone receptor implicated in the regulation of social as well as reproductive behavior.</text>
</comment>
<comment type="subcellular location">
    <subcellularLocation>
        <location evidence="4">Cell membrane</location>
        <topology evidence="2">Multi-pass membrane protein</topology>
    </subcellularLocation>
</comment>
<comment type="similarity">
    <text evidence="3">Belongs to the G-protein coupled receptor 1 family.</text>
</comment>
<reference evidence="5" key="1">
    <citation type="submission" date="2003-12" db="EMBL/GenBank/DDBJ databases">
        <title>Rat vomeronasal receptors.</title>
        <authorList>
            <person name="Capello L."/>
            <person name="Rodriguez I."/>
        </authorList>
    </citation>
    <scope>NUCLEOTIDE SEQUENCE [MRNA]</scope>
</reference>
<evidence type="ECO:0000250" key="1">
    <source>
        <dbReference type="UniProtKB" id="Q8VIC6"/>
    </source>
</evidence>
<evidence type="ECO:0000255" key="2"/>
<evidence type="ECO:0000255" key="3">
    <source>
        <dbReference type="PROSITE-ProRule" id="PRU00521"/>
    </source>
</evidence>
<evidence type="ECO:0000305" key="4"/>
<evidence type="ECO:0000312" key="5">
    <source>
        <dbReference type="EMBL" id="AAR87968.1"/>
    </source>
</evidence>
<evidence type="ECO:0000312" key="6">
    <source>
        <dbReference type="RGD" id="1359628"/>
    </source>
</evidence>
<protein>
    <recommendedName>
        <fullName>Vomeronasal type-1 receptor A14</fullName>
    </recommendedName>
</protein>
<proteinExistence type="evidence at transcript level"/>
<feature type="chain" id="PRO_0000239970" description="Vomeronasal type-1 receptor A14">
    <location>
        <begin position="1"/>
        <end position="339"/>
    </location>
</feature>
<feature type="topological domain" description="Extracellular" evidence="2">
    <location>
        <begin position="1"/>
        <end position="42"/>
    </location>
</feature>
<feature type="transmembrane region" description="Helical; Name=1" evidence="2">
    <location>
        <begin position="43"/>
        <end position="63"/>
    </location>
</feature>
<feature type="topological domain" description="Cytoplasmic" evidence="2">
    <location>
        <begin position="64"/>
        <end position="75"/>
    </location>
</feature>
<feature type="transmembrane region" description="Helical; Name=2" evidence="2">
    <location>
        <begin position="76"/>
        <end position="96"/>
    </location>
</feature>
<feature type="topological domain" description="Extracellular" evidence="2">
    <location>
        <begin position="97"/>
        <end position="119"/>
    </location>
</feature>
<feature type="transmembrane region" description="Helical; Name=3" evidence="2">
    <location>
        <begin position="120"/>
        <end position="140"/>
    </location>
</feature>
<feature type="topological domain" description="Cytoplasmic" evidence="2">
    <location>
        <begin position="141"/>
        <end position="160"/>
    </location>
</feature>
<feature type="transmembrane region" description="Helical; Name=4" evidence="2">
    <location>
        <begin position="161"/>
        <end position="181"/>
    </location>
</feature>
<feature type="topological domain" description="Extracellular" evidence="2">
    <location>
        <begin position="182"/>
        <end position="213"/>
    </location>
</feature>
<feature type="transmembrane region" description="Helical; Name=5" evidence="2">
    <location>
        <begin position="214"/>
        <end position="234"/>
    </location>
</feature>
<feature type="topological domain" description="Cytoplasmic" evidence="2">
    <location>
        <begin position="235"/>
        <end position="264"/>
    </location>
</feature>
<feature type="transmembrane region" description="Helical; Name=6" evidence="2">
    <location>
        <begin position="265"/>
        <end position="285"/>
    </location>
</feature>
<feature type="topological domain" description="Extracellular" evidence="2">
    <location>
        <begin position="286"/>
        <end position="296"/>
    </location>
</feature>
<feature type="transmembrane region" description="Helical; Name=7" evidence="2">
    <location>
        <begin position="297"/>
        <end position="317"/>
    </location>
</feature>
<feature type="topological domain" description="Cytoplasmic" evidence="2">
    <location>
        <begin position="318"/>
        <end position="339"/>
    </location>
</feature>
<feature type="glycosylation site" description="N-linked (GlcNAc...) asparagine" evidence="2">
    <location>
        <position position="185"/>
    </location>
</feature>
<feature type="disulfide bond" evidence="3">
    <location>
        <begin position="111"/>
        <end position="198"/>
    </location>
</feature>
<keyword id="KW-1003">Cell membrane</keyword>
<keyword id="KW-1015">Disulfide bond</keyword>
<keyword id="KW-0297">G-protein coupled receptor</keyword>
<keyword id="KW-0325">Glycoprotein</keyword>
<keyword id="KW-0472">Membrane</keyword>
<keyword id="KW-0589">Pheromone response</keyword>
<keyword id="KW-0675">Receptor</keyword>
<keyword id="KW-1185">Reference proteome</keyword>
<keyword id="KW-0807">Transducer</keyword>
<keyword id="KW-0812">Transmembrane</keyword>
<keyword id="KW-1133">Transmembrane helix</keyword>